<proteinExistence type="predicted"/>
<accession>Q573F5</accession>
<dbReference type="EMBL" id="AJ854042">
    <property type="protein sequence ID" value="CAH69401.1"/>
    <property type="molecule type" value="Genomic_DNA"/>
</dbReference>
<dbReference type="RefSeq" id="YP_001496939.1">
    <property type="nucleotide sequence ID" value="NC_009884.1"/>
</dbReference>
<dbReference type="KEGG" id="vg:5656084"/>
<dbReference type="Proteomes" id="UP000006364">
    <property type="component" value="Genome"/>
</dbReference>
<organism>
    <name type="scientific">Acidianus filamentous virus 2 (isolate Italy/Pozzuoli)</name>
    <name type="common">AFV-2</name>
    <dbReference type="NCBI Taxonomy" id="654910"/>
    <lineage>
        <taxon>Viruses</taxon>
        <taxon>Adnaviria</taxon>
        <taxon>Zilligvirae</taxon>
        <taxon>Taleaviricota</taxon>
        <taxon>Tokiviricetes</taxon>
        <taxon>Ligamenvirales</taxon>
        <taxon>Lipothrixviridae</taxon>
        <taxon>Deltalipothrixvirus</taxon>
        <taxon>Acidianus filamentous virus 2</taxon>
    </lineage>
</organism>
<name>Y181_AFV2P</name>
<gene>
    <name type="ORF">ORF181</name>
</gene>
<keyword id="KW-1185">Reference proteome</keyword>
<sequence>MTILNYNTIGIKGKTAEEFLYRYITGERKFAVIRSVNDNKLDVMKLKVMTIYEKVIASGDAKIRTIIPVVDDSGYVDNYKLMKYKNLILRYDNLPAHAIAKTVYINAIKMGYTYNYKKRVVSLLIFTIDKLSLTLNCDTRNVVVNVVRKICNDKGFENCNDIDKSNVASKVKTYISAFAKK</sequence>
<reference key="1">
    <citation type="journal article" date="2005" name="J. Bacteriol.">
        <title>Structure and genome organization of AFV2, a novel archaeal lipothrixvirus with unusual terminal and core structures.</title>
        <authorList>
            <person name="Haring M."/>
            <person name="Vestergaard G."/>
            <person name="Brugger K."/>
            <person name="Rachel R."/>
            <person name="Garrett R.A."/>
            <person name="Prangishvili D."/>
        </authorList>
    </citation>
    <scope>NUCLEOTIDE SEQUENCE [GENOMIC DNA]</scope>
</reference>
<protein>
    <recommendedName>
        <fullName>Uncharacterized protein ORF181</fullName>
    </recommendedName>
</protein>
<organismHost>
    <name type="scientific">Acidianus sp. F28</name>
    <dbReference type="NCBI Taxonomy" id="315458"/>
</organismHost>
<feature type="chain" id="PRO_0000384516" description="Uncharacterized protein ORF181">
    <location>
        <begin position="1"/>
        <end position="181"/>
    </location>
</feature>